<reference key="1">
    <citation type="journal article" date="1994" name="Hum. Mol. Genet.">
        <title>Characterisation of the novel gene G11 lying adjacent to the complement C4A gene in the human major histocompatibility complex.</title>
        <authorList>
            <person name="Sargent C.A."/>
            <person name="Anderson M.J."/>
            <person name="Hsieh S.-L."/>
            <person name="Kendall E."/>
            <person name="Gomez-Escobar N."/>
            <person name="Campbell R.D."/>
        </authorList>
    </citation>
    <scope>NUCLEOTIDE SEQUENCE [GENOMIC DNA / MRNA] (ISOFORM 3)</scope>
    <scope>NUCLEOTIDE SEQUENCE [GENOMIC DNA] (ISOFORM 4)</scope>
    <scope>TISSUE SPECIFICITY</scope>
</reference>
<reference key="2">
    <citation type="journal article" date="1994" name="J. Biol. Chem.">
        <title>Structure and genetics of the partially duplicated gene RP located immediately upstream of the complement C4A and the C4B genes in the HLA class III region. Molecular cloning, exon-intron structure, composite retroposon, and breakpoint of gene duplication.</title>
        <authorList>
            <person name="Liming S."/>
            <person name="Wu L."/>
            <person name="Sanlioglu S."/>
            <person name="Chen R."/>
            <person name="Mendoza A.R."/>
            <person name="Dangel A.W."/>
            <person name="Carroll M.C."/>
            <person name="Zipf W.B."/>
            <person name="Yu C."/>
        </authorList>
    </citation>
    <scope>NUCLEOTIDE SEQUENCE [GENOMIC DNA / MRNA] (ISOFORM 2)</scope>
</reference>
<reference key="3">
    <citation type="journal article" date="2003" name="Genome Res.">
        <title>Analysis of the gene-dense major histocompatibility complex class III region and its comparison to mouse.</title>
        <authorList>
            <person name="Xie T."/>
            <person name="Rowen L."/>
            <person name="Aguado B."/>
            <person name="Ahearn M.E."/>
            <person name="Madan A."/>
            <person name="Qin S."/>
            <person name="Campbell R.D."/>
            <person name="Hood L."/>
        </authorList>
    </citation>
    <scope>NUCLEOTIDE SEQUENCE [LARGE SCALE GENOMIC DNA]</scope>
</reference>
<reference key="4">
    <citation type="submission" date="2001-10" db="EMBL/GenBank/DDBJ databases">
        <authorList>
            <person name="Barlow K."/>
        </authorList>
    </citation>
    <scope>NUCLEOTIDE SEQUENCE [GENOMIC DNA] (ISOFORMS 3 AND 4)</scope>
</reference>
<reference key="5">
    <citation type="journal article" date="2003" name="Nature">
        <title>The DNA sequence and analysis of human chromosome 6.</title>
        <authorList>
            <person name="Mungall A.J."/>
            <person name="Palmer S.A."/>
            <person name="Sims S.K."/>
            <person name="Edwards C.A."/>
            <person name="Ashurst J.L."/>
            <person name="Wilming L."/>
            <person name="Jones M.C."/>
            <person name="Horton R."/>
            <person name="Hunt S.E."/>
            <person name="Scott C.E."/>
            <person name="Gilbert J.G.R."/>
            <person name="Clamp M.E."/>
            <person name="Bethel G."/>
            <person name="Milne S."/>
            <person name="Ainscough R."/>
            <person name="Almeida J.P."/>
            <person name="Ambrose K.D."/>
            <person name="Andrews T.D."/>
            <person name="Ashwell R.I.S."/>
            <person name="Babbage A.K."/>
            <person name="Bagguley C.L."/>
            <person name="Bailey J."/>
            <person name="Banerjee R."/>
            <person name="Barker D.J."/>
            <person name="Barlow K.F."/>
            <person name="Bates K."/>
            <person name="Beare D.M."/>
            <person name="Beasley H."/>
            <person name="Beasley O."/>
            <person name="Bird C.P."/>
            <person name="Blakey S.E."/>
            <person name="Bray-Allen S."/>
            <person name="Brook J."/>
            <person name="Brown A.J."/>
            <person name="Brown J.Y."/>
            <person name="Burford D.C."/>
            <person name="Burrill W."/>
            <person name="Burton J."/>
            <person name="Carder C."/>
            <person name="Carter N.P."/>
            <person name="Chapman J.C."/>
            <person name="Clark S.Y."/>
            <person name="Clark G."/>
            <person name="Clee C.M."/>
            <person name="Clegg S."/>
            <person name="Cobley V."/>
            <person name="Collier R.E."/>
            <person name="Collins J.E."/>
            <person name="Colman L.K."/>
            <person name="Corby N.R."/>
            <person name="Coville G.J."/>
            <person name="Culley K.M."/>
            <person name="Dhami P."/>
            <person name="Davies J."/>
            <person name="Dunn M."/>
            <person name="Earthrowl M.E."/>
            <person name="Ellington A.E."/>
            <person name="Evans K.A."/>
            <person name="Faulkner L."/>
            <person name="Francis M.D."/>
            <person name="Frankish A."/>
            <person name="Frankland J."/>
            <person name="French L."/>
            <person name="Garner P."/>
            <person name="Garnett J."/>
            <person name="Ghori M.J."/>
            <person name="Gilby L.M."/>
            <person name="Gillson C.J."/>
            <person name="Glithero R.J."/>
            <person name="Grafham D.V."/>
            <person name="Grant M."/>
            <person name="Gribble S."/>
            <person name="Griffiths C."/>
            <person name="Griffiths M.N.D."/>
            <person name="Hall R."/>
            <person name="Halls K.S."/>
            <person name="Hammond S."/>
            <person name="Harley J.L."/>
            <person name="Hart E.A."/>
            <person name="Heath P.D."/>
            <person name="Heathcott R."/>
            <person name="Holmes S.J."/>
            <person name="Howden P.J."/>
            <person name="Howe K.L."/>
            <person name="Howell G.R."/>
            <person name="Huckle E."/>
            <person name="Humphray S.J."/>
            <person name="Humphries M.D."/>
            <person name="Hunt A.R."/>
            <person name="Johnson C.M."/>
            <person name="Joy A.A."/>
            <person name="Kay M."/>
            <person name="Keenan S.J."/>
            <person name="Kimberley A.M."/>
            <person name="King A."/>
            <person name="Laird G.K."/>
            <person name="Langford C."/>
            <person name="Lawlor S."/>
            <person name="Leongamornlert D.A."/>
            <person name="Leversha M."/>
            <person name="Lloyd C.R."/>
            <person name="Lloyd D.M."/>
            <person name="Loveland J.E."/>
            <person name="Lovell J."/>
            <person name="Martin S."/>
            <person name="Mashreghi-Mohammadi M."/>
            <person name="Maslen G.L."/>
            <person name="Matthews L."/>
            <person name="McCann O.T."/>
            <person name="McLaren S.J."/>
            <person name="McLay K."/>
            <person name="McMurray A."/>
            <person name="Moore M.J.F."/>
            <person name="Mullikin J.C."/>
            <person name="Niblett D."/>
            <person name="Nickerson T."/>
            <person name="Novik K.L."/>
            <person name="Oliver K."/>
            <person name="Overton-Larty E.K."/>
            <person name="Parker A."/>
            <person name="Patel R."/>
            <person name="Pearce A.V."/>
            <person name="Peck A.I."/>
            <person name="Phillimore B.J.C.T."/>
            <person name="Phillips S."/>
            <person name="Plumb R.W."/>
            <person name="Porter K.M."/>
            <person name="Ramsey Y."/>
            <person name="Ranby S.A."/>
            <person name="Rice C.M."/>
            <person name="Ross M.T."/>
            <person name="Searle S.M."/>
            <person name="Sehra H.K."/>
            <person name="Sheridan E."/>
            <person name="Skuce C.D."/>
            <person name="Smith S."/>
            <person name="Smith M."/>
            <person name="Spraggon L."/>
            <person name="Squares S.L."/>
            <person name="Steward C.A."/>
            <person name="Sycamore N."/>
            <person name="Tamlyn-Hall G."/>
            <person name="Tester J."/>
            <person name="Theaker A.J."/>
            <person name="Thomas D.W."/>
            <person name="Thorpe A."/>
            <person name="Tracey A."/>
            <person name="Tromans A."/>
            <person name="Tubby B."/>
            <person name="Wall M."/>
            <person name="Wallis J.M."/>
            <person name="West A.P."/>
            <person name="White S.S."/>
            <person name="Whitehead S.L."/>
            <person name="Whittaker H."/>
            <person name="Wild A."/>
            <person name="Willey D.J."/>
            <person name="Wilmer T.E."/>
            <person name="Wood J.M."/>
            <person name="Wray P.W."/>
            <person name="Wyatt J.C."/>
            <person name="Young L."/>
            <person name="Younger R.M."/>
            <person name="Bentley D.R."/>
            <person name="Coulson A."/>
            <person name="Durbin R.M."/>
            <person name="Hubbard T."/>
            <person name="Sulston J.E."/>
            <person name="Dunham I."/>
            <person name="Rogers J."/>
            <person name="Beck S."/>
        </authorList>
    </citation>
    <scope>NUCLEOTIDE SEQUENCE [LARGE SCALE GENOMIC DNA]</scope>
    <scope>VARIANT GLY-197</scope>
</reference>
<reference key="6">
    <citation type="submission" date="2005-07" db="EMBL/GenBank/DDBJ databases">
        <authorList>
            <person name="Mural R.J."/>
            <person name="Istrail S."/>
            <person name="Sutton G.G."/>
            <person name="Florea L."/>
            <person name="Halpern A.L."/>
            <person name="Mobarry C.M."/>
            <person name="Lippert R."/>
            <person name="Walenz B."/>
            <person name="Shatkay H."/>
            <person name="Dew I."/>
            <person name="Miller J.R."/>
            <person name="Flanigan M.J."/>
            <person name="Edwards N.J."/>
            <person name="Bolanos R."/>
            <person name="Fasulo D."/>
            <person name="Halldorsson B.V."/>
            <person name="Hannenhalli S."/>
            <person name="Turner R."/>
            <person name="Yooseph S."/>
            <person name="Lu F."/>
            <person name="Nusskern D.R."/>
            <person name="Shue B.C."/>
            <person name="Zheng X.H."/>
            <person name="Zhong F."/>
            <person name="Delcher A.L."/>
            <person name="Huson D.H."/>
            <person name="Kravitz S.A."/>
            <person name="Mouchard L."/>
            <person name="Reinert K."/>
            <person name="Remington K.A."/>
            <person name="Clark A.G."/>
            <person name="Waterman M.S."/>
            <person name="Eichler E.E."/>
            <person name="Adams M.D."/>
            <person name="Hunkapiller M.W."/>
            <person name="Myers E.W."/>
            <person name="Venter J.C."/>
        </authorList>
    </citation>
    <scope>NUCLEOTIDE SEQUENCE [LARGE SCALE GENOMIC DNA]</scope>
</reference>
<reference key="7">
    <citation type="journal article" date="1996" name="Immunogenetics">
        <title>Complete sequence of the complement C4 gene from the HLA-A1, B8, C4AQ0, C4B1, DR3 haplotype.</title>
        <authorList>
            <person name="Ulgiati D."/>
            <person name="Townend D.C."/>
            <person name="Christiansen F.T."/>
            <person name="Dawkins R.L."/>
            <person name="Abraham L.J."/>
        </authorList>
    </citation>
    <scope>NUCLEOTIDE SEQUENCE [GENOMIC DNA] OF 89-254 (ISOFORMS 2/4)</scope>
    <source>
        <tissue>Blood</tissue>
    </source>
</reference>
<reference key="8">
    <citation type="journal article" date="1998" name="J. Biol. Chem.">
        <title>The G11 gene located in the major histocompatibility complex encodes a novel nuclear serine/threonine protein kinase.</title>
        <authorList>
            <person name="Gomez-Escobar N."/>
            <person name="Chou C.-F."/>
            <person name="Lin W.-W."/>
            <person name="Hsieh S.-L."/>
            <person name="Campbell R.D."/>
        </authorList>
    </citation>
    <scope>SUBCELLULAR LOCATION</scope>
</reference>
<reference key="9">
    <citation type="journal article" date="2019" name="Cell">
        <title>Pharmacological targeting of STK19 inhibits oncogenic NRAS-driven melanomagenesis.</title>
        <authorList>
            <person name="Yin C."/>
            <person name="Zhu B."/>
            <person name="Zhang T."/>
            <person name="Liu T."/>
            <person name="Chen S."/>
            <person name="Liu Y."/>
            <person name="Li X."/>
            <person name="Miao X."/>
            <person name="Li S."/>
            <person name="Mi X."/>
            <person name="Zhang J."/>
            <person name="Li L."/>
            <person name="Wei G."/>
            <person name="Xu Z.X."/>
            <person name="Gao X."/>
            <person name="Huang C."/>
            <person name="Wei Z."/>
            <person name="Goding C.R."/>
            <person name="Wang P."/>
            <person name="Deng X."/>
            <person name="Cui R."/>
        </authorList>
    </citation>
    <scope>VARIANT ASN-89 (ISOFORM 1)</scope>
</reference>
<reference key="10">
    <citation type="journal article" date="2020" name="Cell">
        <title>Evidence That STK19 Is Not an NRAS-dependent Melanoma Driver.</title>
        <authorList>
            <person name="Rodriguez-Martinez M."/>
            <person name="Boissiere T."/>
            <person name="Noe Gonzalez M."/>
            <person name="Litchfield K."/>
            <person name="Mitter R."/>
            <person name="Walker J."/>
            <person name="Kjoer S."/>
            <person name="Ismail M."/>
            <person name="Downward J."/>
            <person name="Swanton C."/>
            <person name="Svejstrup J.Q."/>
        </authorList>
    </citation>
    <scope>FUNCTION</scope>
    <scope>SUBCELLULAR LOCATION</scope>
</reference>
<reference key="11">
    <citation type="journal article" date="2020" name="Cell">
        <title>A Reply to ''Evidence that STK19 Is Not an NRAS-Dependent Melanoma Driver''.</title>
        <authorList>
            <person name="Yin C."/>
            <person name="Zhu B."/>
            <person name="Li X."/>
            <person name="Goding C.R."/>
            <person name="Cui R."/>
        </authorList>
    </citation>
    <scope>FUNCTION</scope>
    <scope>INDUCTION</scope>
    <scope>SUBCELLULAR LOCATION</scope>
</reference>
<reference key="12">
    <citation type="journal article" date="2024" name="Nucleic Acids Res.">
        <title>STK19 is a transcription-coupled repair factor that participates in UVSSA ubiquitination and TFIIH loading.</title>
        <authorList>
            <person name="Tan Y."/>
            <person name="Gao M."/>
            <person name="Huang Y."/>
            <person name="Zhan D."/>
            <person name="Wu S."/>
            <person name="An J."/>
            <person name="Zhang X."/>
            <person name="Hu J."/>
        </authorList>
    </citation>
    <scope>FUNCTION</scope>
</reference>
<reference evidence="22" key="13">
    <citation type="journal article" date="2024" name="Cell">
        <title>STK19 positions TFIIH for cell-free transcription-coupled DNA repair.</title>
        <authorList>
            <person name="Mevissen T.E.T."/>
            <person name="Kuemmecke M."/>
            <person name="Schmid E.W."/>
            <person name="Farnung L."/>
            <person name="Walter J.C."/>
        </authorList>
    </citation>
    <scope>STRUCTURE BY ELECTRON MICROSCOPY (1.9 ANGSTROMS) IN COMPLEX WITH RNA POLYMERASE II; ERCC6; ERCC8; DDA1; DDB1; ELOF1 AND UVSSA</scope>
    <scope>FUNCTION</scope>
</reference>
<reference evidence="23" key="14">
    <citation type="journal article" date="2024" name="Cell">
        <title>STK19 facilitates the clearance of lesion-stalled RNAPII during transcription-coupled DNA repair.</title>
        <authorList>
            <person name="van den Heuvel D."/>
            <person name="Rodriguez-Martinez M."/>
            <person name="van der Meer P.J."/>
            <person name="Nieto Moreno N."/>
            <person name="Park J."/>
            <person name="Kim H.S."/>
            <person name="van Schie J.J.M."/>
            <person name="Wondergem A.P."/>
            <person name="D'Souza A."/>
            <person name="Yakoub G."/>
            <person name="Herlihy A.E."/>
            <person name="Kashyap K."/>
            <person name="Boissiere T."/>
            <person name="Walker J."/>
            <person name="Mitter R."/>
            <person name="Apelt K."/>
            <person name="de Lint K."/>
            <person name="Kirdoek I."/>
            <person name="Ljungman M."/>
            <person name="Wolthuis R.M.F."/>
            <person name="Cramer P."/>
            <person name="Schaerer O.D."/>
            <person name="Kokic G."/>
            <person name="Svejstrup J.Q."/>
            <person name="Luijsterburg M.S."/>
        </authorList>
    </citation>
    <scope>STRUCTURE BY ELECTRON MICROSCOPY (3.3 ANGSTROMS) IN COMPLEX WITH RNA POLYMERASE II; ERCC6; ERCC8; DDB1; ELOF1 AND UVSSA</scope>
    <scope>FUNCTION</scope>
    <scope>SUBCELLULAR LOCATION</scope>
    <scope>MUTAGENESIS OF LYS-186; 200-ARG-LYS-201 AND ARG-200</scope>
</reference>
<reference evidence="20" key="15">
    <citation type="journal article" date="2024" name="J. Cell Biol.">
        <title>STK19 is a DNA/RNA-binding protein critical for DNA damage repair and cell proliferation.</title>
        <authorList>
            <person name="Li Y."/>
            <person name="Gong Y."/>
            <person name="Zhou Y."/>
            <person name="Xiao Y."/>
            <person name="Huang W."/>
            <person name="Zhou Q."/>
            <person name="Tu Y."/>
            <person name="Zhao Y."/>
            <person name="Zhang S."/>
            <person name="Dai L."/>
            <person name="Sun Q."/>
        </authorList>
    </citation>
    <scope>X-RAY CRYSTALLOGRAPHY (1.65 ANGSTROMS) OF 25-254</scope>
    <scope>FUNCTION</scope>
    <scope>SUBUNIT</scope>
    <scope>SUBCELLULAR LOCATION</scope>
    <scope>INDUCTION</scope>
    <scope>WINGED HELIX DOMAINS</scope>
    <scope>MUTAGENESIS OF 4-LYS--ARG-21; LYS-186; LYS-190; LYS-201; TYR-204; GLU-206; LEU-248 AND ARG-250</scope>
</reference>
<reference evidence="24" key="16">
    <citation type="journal article" date="2024" name="Mol. Cell">
        <title>STK19 drives transcription-coupled repair by stimulating repair complex stability, RNA Pol II ubiquitylation, and TFIIH recruitment.</title>
        <authorList>
            <person name="Ramadhin A.R."/>
            <person name="Lee S.H."/>
            <person name="Zhou D."/>
            <person name="Salmazo A."/>
            <person name="Gonzalo-Hansen C."/>
            <person name="van Sluis M."/>
            <person name="Blom C.M.A."/>
            <person name="Janssens R.C."/>
            <person name="Raams A."/>
            <person name="Dekkers D."/>
            <person name="Bezstarosti K."/>
            <person name="Slade D."/>
            <person name="Vermeulen W."/>
            <person name="Pines A."/>
            <person name="Demmers J.A.A."/>
            <person name="Bernecky C."/>
            <person name="Sixma T.K."/>
            <person name="Marteijn J.A."/>
        </authorList>
    </citation>
    <scope>STRUCTURE BY ELECTRON MICROSCOPY (3.4 ANGSTROMS) IN COMPLEX WITH RNA POLYMERASE II; ERCC6; ERCC8; DDA1; DDB1; ELOF1 AND UVSSA</scope>
    <scope>FUNCTION</scope>
    <scope>MUTAGENESIS OF 72-ARG-THR-73; 181-ALA-GLY-182; LYS-190; 203-LYS-TYR-204 AND ARG-216</scope>
</reference>
<reference evidence="21" key="17">
    <citation type="journal article" date="2024" name="Sci. Rep.">
        <title>Mutations found in cancer patients compromise DNA binding of the winged helix protein STK19.</title>
        <authorList>
            <person name="Li J."/>
            <person name="Ma X."/>
            <person name="Wang X."/>
            <person name="Hu X."/>
            <person name="Fang S."/>
            <person name="Jin G."/>
            <person name="Liu K."/>
            <person name="Dong Z."/>
        </authorList>
    </citation>
    <scope>X-RAY CRYSTALLOGRAPHY (1.32 ANGSTROMS) OF 31-254</scope>
    <scope>FUNCTION</scope>
    <scope>SUBUNIT</scope>
    <scope>MUTAGENESIS OF LYS-186; 200-ARG--LYS-203 AND 215-ARG-ARG-216</scope>
</reference>
<reference key="18">
    <citation type="journal article" date="2007" name="Nature">
        <title>Patterns of somatic mutation in human cancer genomes.</title>
        <authorList>
            <person name="Greenman C."/>
            <person name="Stephens P."/>
            <person name="Smith R."/>
            <person name="Dalgliesh G.L."/>
            <person name="Hunter C."/>
            <person name="Bignell G."/>
            <person name="Davies H."/>
            <person name="Teague J."/>
            <person name="Butler A."/>
            <person name="Stevens C."/>
            <person name="Edkins S."/>
            <person name="O'Meara S."/>
            <person name="Vastrik I."/>
            <person name="Schmidt E.E."/>
            <person name="Avis T."/>
            <person name="Barthorpe S."/>
            <person name="Bhamra G."/>
            <person name="Buck G."/>
            <person name="Choudhury B."/>
            <person name="Clements J."/>
            <person name="Cole J."/>
            <person name="Dicks E."/>
            <person name="Forbes S."/>
            <person name="Gray K."/>
            <person name="Halliday K."/>
            <person name="Harrison R."/>
            <person name="Hills K."/>
            <person name="Hinton J."/>
            <person name="Jenkinson A."/>
            <person name="Jones D."/>
            <person name="Menzies A."/>
            <person name="Mironenko T."/>
            <person name="Perry J."/>
            <person name="Raine K."/>
            <person name="Richardson D."/>
            <person name="Shepherd R."/>
            <person name="Small A."/>
            <person name="Tofts C."/>
            <person name="Varian J."/>
            <person name="Webb T."/>
            <person name="West S."/>
            <person name="Widaa S."/>
            <person name="Yates A."/>
            <person name="Cahill D.P."/>
            <person name="Louis D.N."/>
            <person name="Goldstraw P."/>
            <person name="Nicholson A.G."/>
            <person name="Brasseur F."/>
            <person name="Looijenga L."/>
            <person name="Weber B.L."/>
            <person name="Chiew Y.-E."/>
            <person name="DeFazio A."/>
            <person name="Greaves M.F."/>
            <person name="Green A.R."/>
            <person name="Campbell P."/>
            <person name="Birney E."/>
            <person name="Easton D.F."/>
            <person name="Chenevix-Trench G."/>
            <person name="Tan M.-H."/>
            <person name="Khoo S.K."/>
            <person name="Teh B.T."/>
            <person name="Yuen S.T."/>
            <person name="Leung S.Y."/>
            <person name="Wooster R."/>
            <person name="Futreal P.A."/>
            <person name="Stratton M.R."/>
        </authorList>
    </citation>
    <scope>VARIANT [LARGE SCALE ANALYSIS] ASN-89 (ISOFORM 1)</scope>
    <scope>VARIANTS [LARGE SCALE ANALYSIS] GLY-197 AND VAL-217</scope>
</reference>
<gene>
    <name evidence="19" type="primary">WHR1</name>
    <name evidence="16" type="synonym">G11</name>
    <name evidence="17" type="synonym">RP1</name>
    <name evidence="14 19" type="synonym">STK19</name>
    <name evidence="15" type="synonym">TWH19</name>
</gene>
<name>WHR1_HUMAN</name>
<proteinExistence type="evidence at protein level"/>
<keyword id="KW-0002">3D-structure</keyword>
<keyword id="KW-0025">Alternative splicing</keyword>
<keyword id="KW-0963">Cytoplasm</keyword>
<keyword id="KW-0227">DNA damage</keyword>
<keyword id="KW-0234">DNA repair</keyword>
<keyword id="KW-0238">DNA-binding</keyword>
<keyword id="KW-0539">Nucleus</keyword>
<keyword id="KW-1267">Proteomics identification</keyword>
<keyword id="KW-1185">Reference proteome</keyword>
<keyword id="KW-0677">Repeat</keyword>
<keyword id="KW-0694">RNA-binding</keyword>
<evidence type="ECO:0000269" key="1">
    <source>
    </source>
</evidence>
<evidence type="ECO:0000269" key="2">
    <source>
    </source>
</evidence>
<evidence type="ECO:0000269" key="3">
    <source>
    </source>
</evidence>
<evidence type="ECO:0000269" key="4">
    <source>
    </source>
</evidence>
<evidence type="ECO:0000269" key="5">
    <source>
    </source>
</evidence>
<evidence type="ECO:0000269" key="6">
    <source>
    </source>
</evidence>
<evidence type="ECO:0000269" key="7">
    <source>
    </source>
</evidence>
<evidence type="ECO:0000269" key="8">
    <source>
    </source>
</evidence>
<evidence type="ECO:0000269" key="9">
    <source>
    </source>
</evidence>
<evidence type="ECO:0000269" key="10">
    <source>
    </source>
</evidence>
<evidence type="ECO:0000269" key="11">
    <source>
    </source>
</evidence>
<evidence type="ECO:0000269" key="12">
    <source>
    </source>
</evidence>
<evidence type="ECO:0000269" key="13">
    <source>
    </source>
</evidence>
<evidence type="ECO:0000303" key="14">
    <source>
    </source>
</evidence>
<evidence type="ECO:0000303" key="15">
    <source>
    </source>
</evidence>
<evidence type="ECO:0000303" key="16">
    <source>
    </source>
</evidence>
<evidence type="ECO:0000303" key="17">
    <source>
    </source>
</evidence>
<evidence type="ECO:0000305" key="18"/>
<evidence type="ECO:0000312" key="19">
    <source>
        <dbReference type="HGNC" id="HGNC:11398"/>
    </source>
</evidence>
<evidence type="ECO:0007744" key="20">
    <source>
        <dbReference type="PDB" id="7XRB"/>
    </source>
</evidence>
<evidence type="ECO:0007744" key="21">
    <source>
        <dbReference type="PDB" id="8YCM"/>
    </source>
</evidence>
<evidence type="ECO:0007744" key="22">
    <source>
        <dbReference type="PDB" id="9BZ0"/>
    </source>
</evidence>
<evidence type="ECO:0007744" key="23">
    <source>
        <dbReference type="PDB" id="9ER2"/>
    </source>
</evidence>
<evidence type="ECO:0007744" key="24">
    <source>
        <dbReference type="PDB" id="9FD2"/>
    </source>
</evidence>
<evidence type="ECO:0007829" key="25">
    <source>
        <dbReference type="PDB" id="8YCM"/>
    </source>
</evidence>
<evidence type="ECO:0007829" key="26">
    <source>
        <dbReference type="PDB" id="9BZ0"/>
    </source>
</evidence>
<evidence type="ECO:0007829" key="27">
    <source>
        <dbReference type="PDB" id="9FD2"/>
    </source>
</evidence>
<accession>P49842</accession>
<accession>A6NF95</accession>
<accession>A6NFW8</accession>
<accession>B0QZR5</accession>
<accession>Q13159</accession>
<accession>Q31617</accession>
<accession>Q5JP77</accession>
<accession>Q5ST72</accession>
<accession>Q5ST75</accession>
<comment type="function">
    <text evidence="6 7 8 9 10 11">DNA-binding protein which is required for efficient transcription-coupled nucleotide excision repair (TC-NER) (PubMed:38252411, PubMed:38890355, PubMed:39353615, PubMed:39547223, PubMed:39547228, PubMed:39547229). Acts as part of a TC-NER complex which assembles and interacts with RNA polymerase II (RNAPII) when it stalls at DNA lesions (PubMed:39547223, PubMed:39547228, PubMed:39547229). TC-NER complex subunit UVSSA binds to the GTF2H1/p62 subunit of the TFIIH transcription factor complex, tethering TFIIH to the TC-NER complex (PubMed:39547228). WHR1/STK19 then interacts with the XPD helicase subunit of TFIIH which guides TFIIH to DNA downstream of the stalled RNAPII, ensuring DNA repair (PubMed:39353615, PubMed:39547228, PubMed:39547229). Directly interacts with RNAPII and also binds to downstream DNA (PubMed:39547229). Promotes the timely removal of DNA damage-stalled RNAPII, allowing downstream NER factors to access DNA lesions (PubMed:39547228, PubMed:39547229). Required for monoubiquitination of UVSSA (PubMed:39353615). Regulates repositioning and stabilization of UVSSA within the TC-NER complex (PubMed:39547223). Stimulates ubiquitination of RNAPII complex member RBP1 (PubMed:39547223). Also binds to RNA and regulates the expression levels of many mRNAs (PubMed:38252411, PubMed:38890355).</text>
</comment>
<comment type="subunit">
    <text evidence="6 7 9 10 11">Monomer in solution (PubMed:38890355). Homodimer; when bound to DNA (PubMed:38252411). Component of a transcription-coupled nucleotide excision repair (TC-NER) complex composed of STK19, ERCC6, ERCC8, DDA1, DDB1, ELOF1 and UVSSA which assembles and interacts with the multiprotein RNA polymerase II complex when it stalls at DNA lesions (PubMed:39547223, PubMed:39547228, PubMed:39547229).</text>
</comment>
<comment type="interaction">
    <interactant intactId="EBI-347581">
        <id>P49842</id>
    </interactant>
    <interactant intactId="EBI-2875625">
        <id>Q9Y575</id>
        <label>ASB3</label>
    </interactant>
    <organismsDiffer>false</organismsDiffer>
    <experiments>2</experiments>
</comment>
<comment type="subcellular location">
    <molecule>Isoform 4</molecule>
    <subcellularLocation>
        <location evidence="6 11">Nucleus</location>
    </subcellularLocation>
</comment>
<comment type="subcellular location">
    <molecule>Isoform 3</molecule>
    <subcellularLocation>
        <location evidence="4">Nucleus</location>
    </subcellularLocation>
    <text evidence="4">Very tightly chromatin-associated.</text>
</comment>
<comment type="subcellular location">
    <molecule>Isoform 1</molecule>
    <subcellularLocation>
        <location evidence="5 13">Nucleus</location>
    </subcellularLocation>
    <subcellularLocation>
        <location evidence="5">Cytoplasm</location>
    </subcellularLocation>
</comment>
<comment type="alternative products">
    <event type="alternative splicing"/>
    <isoform>
        <id>P49842-4</id>
        <name>4</name>
        <name evidence="16">G11-Y-short</name>
        <sequence type="displayed"/>
    </isoform>
    <isoform>
        <id>P49842-1</id>
        <name>1</name>
        <name>G11-Z</name>
        <sequence type="described" ref="VSP_061960 VSP_061961"/>
    </isoform>
    <isoform>
        <id>P49842-2</id>
        <name>2</name>
        <name>G11-Z-short</name>
        <sequence type="described" ref="VSP_061960"/>
    </isoform>
    <isoform>
        <id>P49842-3</id>
        <name>3</name>
        <name evidence="16">G11-Y</name>
        <sequence type="described" ref="VSP_061961"/>
    </isoform>
</comment>
<comment type="tissue specificity">
    <text evidence="12">Monocytes, hepatocytes, epithelial cells, T- and B-lymphocytes.</text>
</comment>
<comment type="induction">
    <text evidence="6">By ultraviolet radiation (at protein level).</text>
</comment>
<comment type="induction">
    <molecule>Isoform 1</molecule>
    <text evidence="5">Increased by ultraviolet radiation in melanocytes.</text>
</comment>
<comment type="similarity">
    <text evidence="18">Belongs to the STK19 family.</text>
</comment>
<comment type="caution">
    <text evidence="3 4 5 6 10 11 13">Was originally reported to be a serine/threonine-protein kinase that phosphorylates CSN1S1/alpha-casein at serine/threonine residues and histones at serine residues (PubMed:9812991). Was also reported to phosphorylate NRAS at serine residues (PubMed:30712867, PubMed:9812991). However, later studies have shown that the protein does not have kinase activity and is involved in transcription-coupled nucleotide excision repair (PubMed:32531245, PubMed:32531246, PubMed:38252411, PubMed:39547228, PubMed:39547229).</text>
</comment>
<comment type="caution">
    <molecule>Isoform 1</molecule>
    <text evidence="3 4">There is a discrepancy about the expression of this isoform (PubMed:30712867, PubMed:32531245). At protein level, Rodriguez-Martinez et al. show that isoform 1 is not expressed in melanocyte cell lines and two commonly used human cell lines (HEK293 and HeLa) (PubMed:32531245). According to Yin et al., isoform 1 is expressed at very low levels in melanocyte cell lines and human primary melanocytes (PubMed:30712867).</text>
</comment>
<comment type="sequence caution" evidence="18">
    <conflict type="miscellaneous discrepancy">
        <sequence resource="EMBL-CDS" id="AAA99716"/>
    </conflict>
    <text>Contaminating sequence.</text>
</comment>
<organism>
    <name type="scientific">Homo sapiens</name>
    <name type="common">Human</name>
    <dbReference type="NCBI Taxonomy" id="9606"/>
    <lineage>
        <taxon>Eukaryota</taxon>
        <taxon>Metazoa</taxon>
        <taxon>Chordata</taxon>
        <taxon>Craniata</taxon>
        <taxon>Vertebrata</taxon>
        <taxon>Euteleostomi</taxon>
        <taxon>Mammalia</taxon>
        <taxon>Eutheria</taxon>
        <taxon>Euarchontoglires</taxon>
        <taxon>Primates</taxon>
        <taxon>Haplorrhini</taxon>
        <taxon>Catarrhini</taxon>
        <taxon>Hominidae</taxon>
        <taxon>Homo</taxon>
    </lineage>
</organism>
<dbReference type="EMBL" id="X77386">
    <property type="protein sequence ID" value="CAA54565.1"/>
    <property type="molecule type" value="mRNA"/>
</dbReference>
<dbReference type="EMBL" id="X77474">
    <property type="protein sequence ID" value="CAA54622.1"/>
    <property type="molecule type" value="Genomic_DNA"/>
</dbReference>
<dbReference type="EMBL" id="X77489">
    <property type="protein sequence ID" value="CAA54622.1"/>
    <property type="status" value="JOINED"/>
    <property type="molecule type" value="Genomic_DNA"/>
</dbReference>
<dbReference type="EMBL" id="X77490">
    <property type="protein sequence ID" value="CAA54622.1"/>
    <property type="status" value="JOINED"/>
    <property type="molecule type" value="Genomic_DNA"/>
</dbReference>
<dbReference type="EMBL" id="X77491">
    <property type="protein sequence ID" value="CAA54622.1"/>
    <property type="status" value="JOINED"/>
    <property type="molecule type" value="Genomic_DNA"/>
</dbReference>
<dbReference type="EMBL" id="X77474">
    <property type="protein sequence ID" value="CAA54623.1"/>
    <property type="molecule type" value="Genomic_DNA"/>
</dbReference>
<dbReference type="EMBL" id="X77489">
    <property type="protein sequence ID" value="CAA54623.1"/>
    <property type="status" value="JOINED"/>
    <property type="molecule type" value="Genomic_DNA"/>
</dbReference>
<dbReference type="EMBL" id="X77490">
    <property type="protein sequence ID" value="CAA54623.1"/>
    <property type="status" value="JOINED"/>
    <property type="molecule type" value="Genomic_DNA"/>
</dbReference>
<dbReference type="EMBL" id="X77491">
    <property type="protein sequence ID" value="CAA54623.1"/>
    <property type="status" value="JOINED"/>
    <property type="molecule type" value="Genomic_DNA"/>
</dbReference>
<dbReference type="EMBL" id="L26261">
    <property type="protein sequence ID" value="AAA20120.1"/>
    <property type="molecule type" value="Genomic_DNA"/>
</dbReference>
<dbReference type="EMBL" id="L26260">
    <property type="protein sequence ID" value="AAA20122.1"/>
    <property type="molecule type" value="mRNA"/>
</dbReference>
<dbReference type="EMBL" id="AF019413">
    <property type="protein sequence ID" value="AAB67976.1"/>
    <property type="molecule type" value="Genomic_DNA"/>
</dbReference>
<dbReference type="EMBL" id="AL049547">
    <property type="protein sequence ID" value="CAB89303.1"/>
    <property type="molecule type" value="Genomic_DNA"/>
</dbReference>
<dbReference type="EMBL" id="AL049547">
    <property type="protein sequence ID" value="CAB89304.1"/>
    <property type="molecule type" value="Genomic_DNA"/>
</dbReference>
<dbReference type="EMBL" id="AL645922">
    <property type="status" value="NOT_ANNOTATED_CDS"/>
    <property type="molecule type" value="Genomic_DNA"/>
</dbReference>
<dbReference type="EMBL" id="AL662849">
    <property type="status" value="NOT_ANNOTATED_CDS"/>
    <property type="molecule type" value="Genomic_DNA"/>
</dbReference>
<dbReference type="EMBL" id="AL844853">
    <property type="status" value="NOT_ANNOTATED_CDS"/>
    <property type="molecule type" value="Genomic_DNA"/>
</dbReference>
<dbReference type="EMBL" id="BX679671">
    <property type="status" value="NOT_ANNOTATED_CDS"/>
    <property type="molecule type" value="Genomic_DNA"/>
</dbReference>
<dbReference type="EMBL" id="CR753822">
    <property type="status" value="NOT_ANNOTATED_CDS"/>
    <property type="molecule type" value="Genomic_DNA"/>
</dbReference>
<dbReference type="EMBL" id="CR753845">
    <property type="status" value="NOT_ANNOTATED_CDS"/>
    <property type="molecule type" value="Genomic_DNA"/>
</dbReference>
<dbReference type="EMBL" id="CR759782">
    <property type="status" value="NOT_ANNOTATED_CDS"/>
    <property type="molecule type" value="Genomic_DNA"/>
</dbReference>
<dbReference type="EMBL" id="CH471081">
    <property type="protein sequence ID" value="EAX03566.1"/>
    <property type="molecule type" value="Genomic_DNA"/>
</dbReference>
<dbReference type="EMBL" id="CH471081">
    <property type="protein sequence ID" value="EAX03567.1"/>
    <property type="molecule type" value="Genomic_DNA"/>
</dbReference>
<dbReference type="EMBL" id="U24578">
    <property type="protein sequence ID" value="AAA99716.1"/>
    <property type="status" value="ALT_SEQ"/>
    <property type="molecule type" value="Genomic_DNA"/>
</dbReference>
<dbReference type="CCDS" id="CCDS34417.2">
    <molecule id="P49842-4"/>
</dbReference>
<dbReference type="PIR" id="B53439">
    <property type="entry name" value="A53439"/>
</dbReference>
<dbReference type="RefSeq" id="NP_004188.1">
    <molecule id="P49842-4"/>
    <property type="nucleotide sequence ID" value="NM_004197.1"/>
</dbReference>
<dbReference type="RefSeq" id="NP_115830.1">
    <molecule id="P49842-1"/>
    <property type="nucleotide sequence ID" value="NM_032454.1"/>
</dbReference>
<dbReference type="PDB" id="7XRB">
    <property type="method" value="X-ray"/>
    <property type="resolution" value="1.65 A"/>
    <property type="chains" value="A/B=25-254"/>
</dbReference>
<dbReference type="PDB" id="8YCM">
    <property type="method" value="X-ray"/>
    <property type="resolution" value="1.32 A"/>
    <property type="chains" value="A/B=31-254"/>
</dbReference>
<dbReference type="PDB" id="9BZ0">
    <property type="method" value="EM"/>
    <property type="resolution" value="1.90 A"/>
    <property type="chains" value="f=1-254"/>
</dbReference>
<dbReference type="PDB" id="9ER2">
    <property type="method" value="EM"/>
    <property type="resolution" value="3.30 A"/>
    <property type="chains" value="Q=1-254"/>
</dbReference>
<dbReference type="PDB" id="9FD2">
    <property type="method" value="EM"/>
    <property type="resolution" value="3.40 A"/>
    <property type="chains" value="g=1-254"/>
</dbReference>
<dbReference type="PDBsum" id="7XRB"/>
<dbReference type="PDBsum" id="8YCM"/>
<dbReference type="PDBsum" id="9BZ0"/>
<dbReference type="PDBsum" id="9ER2"/>
<dbReference type="PDBsum" id="9FD2"/>
<dbReference type="EMDB" id="EMD-19909"/>
<dbReference type="EMDB" id="EMD-45050"/>
<dbReference type="EMDB" id="EMD-50292"/>
<dbReference type="EMDB" id="EMD-50293"/>
<dbReference type="EMDB" id="EMD-50325"/>
<dbReference type="SMR" id="P49842"/>
<dbReference type="BioGRID" id="114383">
    <property type="interactions" value="26"/>
</dbReference>
<dbReference type="FunCoup" id="P49842">
    <property type="interactions" value="1164"/>
</dbReference>
<dbReference type="IntAct" id="P49842">
    <property type="interactions" value="15"/>
</dbReference>
<dbReference type="STRING" id="9606.ENSP00000364482"/>
<dbReference type="BindingDB" id="P49842"/>
<dbReference type="ChEMBL" id="CHEMBL4879437"/>
<dbReference type="iPTMnet" id="P49842"/>
<dbReference type="BioMuta" id="STK19"/>
<dbReference type="DMDM" id="19860281"/>
<dbReference type="jPOST" id="P49842"/>
<dbReference type="MassIVE" id="P49842"/>
<dbReference type="PaxDb" id="9606-ENSP00000364482"/>
<dbReference type="PeptideAtlas" id="P49842"/>
<dbReference type="ProteomicsDB" id="56153">
    <molecule id="P49842-1"/>
</dbReference>
<dbReference type="ProteomicsDB" id="56154">
    <molecule id="P49842-2"/>
</dbReference>
<dbReference type="ProteomicsDB" id="56155">
    <molecule id="P49842-3"/>
</dbReference>
<dbReference type="ProteomicsDB" id="56156">
    <molecule id="P49842-4"/>
</dbReference>
<dbReference type="Pumba" id="P49842"/>
<dbReference type="Antibodypedia" id="28162">
    <property type="antibodies" value="184 antibodies from 24 providers"/>
</dbReference>
<dbReference type="DNASU" id="8859"/>
<dbReference type="Ensembl" id="ENST00000375331.8">
    <molecule id="P49842-2"/>
    <property type="protein sequence ID" value="ENSP00000364480.4"/>
    <property type="gene ID" value="ENSG00000204344.16"/>
</dbReference>
<dbReference type="Ensembl" id="ENST00000375333.4">
    <molecule id="P49842-1"/>
    <property type="protein sequence ID" value="ENSP00000364482.4"/>
    <property type="gene ID" value="ENSG00000204344.16"/>
</dbReference>
<dbReference type="Ensembl" id="ENST00000383327.8">
    <property type="protein sequence ID" value="ENSP00000372817.4"/>
    <property type="gene ID" value="ENSG00000206342.12"/>
</dbReference>
<dbReference type="Ensembl" id="ENST00000424104.5">
    <molecule id="P49842-2"/>
    <property type="protein sequence ID" value="ENSP00000393272.1"/>
    <property type="gene ID" value="ENSG00000236250.8"/>
</dbReference>
<dbReference type="Ensembl" id="ENST00000425138.5">
    <molecule id="P49842-2"/>
    <property type="protein sequence ID" value="ENSP00000395028.1"/>
    <property type="gene ID" value="ENSG00000234947.8"/>
</dbReference>
<dbReference type="Ensembl" id="ENST00000426802.5">
    <molecule id="P49842-2"/>
    <property type="protein sequence ID" value="ENSP00000389352.1"/>
    <property type="gene ID" value="ENSG00000226257.9"/>
</dbReference>
<dbReference type="Ensembl" id="ENST00000431383.6">
    <molecule id="P49842-1"/>
    <property type="protein sequence ID" value="ENSP00000403479.2"/>
    <property type="gene ID" value="ENSG00000226033.11"/>
</dbReference>
<dbReference type="Ensembl" id="ENST00000433397.6">
    <molecule id="P49842-1"/>
    <property type="protein sequence ID" value="ENSP00000395864.2"/>
    <property type="gene ID" value="ENSG00000234947.8"/>
</dbReference>
<dbReference type="Ensembl" id="ENST00000438256.6">
    <molecule id="P49842-1"/>
    <property type="protein sequence ID" value="ENSP00000391798.2"/>
    <property type="gene ID" value="ENSG00000236250.8"/>
</dbReference>
<dbReference type="Ensembl" id="ENST00000444147.5">
    <molecule id="P49842-2"/>
    <property type="protein sequence ID" value="ENSP00000399915.1"/>
    <property type="gene ID" value="ENSG00000226033.11"/>
</dbReference>
<dbReference type="Ensembl" id="ENST00000452688.6">
    <molecule id="P49842-1"/>
    <property type="protein sequence ID" value="ENSP00000413766.2"/>
    <property type="gene ID" value="ENSG00000226257.9"/>
</dbReference>
<dbReference type="Ensembl" id="ENST00000460018.3">
    <molecule id="P49842-2"/>
    <property type="protein sequence ID" value="ENSP00000418350.3"/>
    <property type="gene ID" value="ENSG00000204344.16"/>
</dbReference>
<dbReference type="Ensembl" id="ENST00000466132.6">
    <molecule id="P49842-4"/>
    <property type="protein sequence ID" value="ENSP00000519788.1"/>
    <property type="gene ID" value="ENSG00000204344.16"/>
</dbReference>
<dbReference type="Ensembl" id="ENST00000492583.6">
    <molecule id="P49842-3"/>
    <property type="protein sequence ID" value="ENSP00000519789.1"/>
    <property type="gene ID" value="ENSG00000204344.16"/>
</dbReference>
<dbReference type="Ensembl" id="ENST00000685781.1">
    <molecule id="P49842-4"/>
    <property type="protein sequence ID" value="ENSP00000509445.1"/>
    <property type="gene ID" value="ENSG00000204344.16"/>
</dbReference>
<dbReference type="GeneID" id="8859"/>
<dbReference type="KEGG" id="hsa:8859"/>
<dbReference type="MANE-Select" id="ENST00000685781.1">
    <property type="protein sequence ID" value="ENSP00000509445.1"/>
    <property type="RefSeq nucleotide sequence ID" value="NM_004197.2"/>
    <property type="RefSeq protein sequence ID" value="NP_004188.2"/>
</dbReference>
<dbReference type="UCSC" id="uc003nyv.4">
    <molecule id="P49842-4"/>
    <property type="organism name" value="human"/>
</dbReference>
<dbReference type="AGR" id="HGNC:11398"/>
<dbReference type="CTD" id="8859"/>
<dbReference type="DisGeNET" id="8859"/>
<dbReference type="GeneCards" id="STK19"/>
<dbReference type="HGNC" id="HGNC:11398">
    <property type="gene designation" value="WHR1"/>
</dbReference>
<dbReference type="HPA" id="ENSG00000204344">
    <property type="expression patterns" value="Low tissue specificity"/>
</dbReference>
<dbReference type="MIM" id="604977">
    <property type="type" value="gene"/>
</dbReference>
<dbReference type="neXtProt" id="NX_P49842"/>
<dbReference type="OpenTargets" id="ENSG00000204344"/>
<dbReference type="PharmGKB" id="PA36206"/>
<dbReference type="VEuPathDB" id="HostDB:ENSG00000204344"/>
<dbReference type="eggNOG" id="ENOG502RDW5">
    <property type="taxonomic scope" value="Eukaryota"/>
</dbReference>
<dbReference type="GeneTree" id="ENSGT00390000018295"/>
<dbReference type="HOGENOM" id="CLU_064399_0_0_1"/>
<dbReference type="InParanoid" id="P49842"/>
<dbReference type="OMA" id="CPRREPI"/>
<dbReference type="OrthoDB" id="10261701at2759"/>
<dbReference type="PAN-GO" id="P49842">
    <property type="GO annotations" value="3 GO annotations based on evolutionary models"/>
</dbReference>
<dbReference type="PhylomeDB" id="P49842"/>
<dbReference type="TreeFam" id="TF105332"/>
<dbReference type="PathwayCommons" id="P49842"/>
<dbReference type="SignaLink" id="P49842"/>
<dbReference type="SIGNOR" id="P49842"/>
<dbReference type="BioGRID-ORCS" id="8859">
    <property type="hits" value="13 hits in 1188 CRISPR screens"/>
</dbReference>
<dbReference type="ChiTaRS" id="STK19">
    <property type="organism name" value="human"/>
</dbReference>
<dbReference type="GeneWiki" id="STK19"/>
<dbReference type="GenomeRNAi" id="8859"/>
<dbReference type="Pharos" id="P49842">
    <property type="development level" value="Tchem"/>
</dbReference>
<dbReference type="PRO" id="PR:P49842"/>
<dbReference type="Proteomes" id="UP000005640">
    <property type="component" value="Chromosome 6"/>
</dbReference>
<dbReference type="RNAct" id="P49842">
    <property type="molecule type" value="protein"/>
</dbReference>
<dbReference type="Bgee" id="ENSG00000204344">
    <property type="expression patterns" value="Expressed in left adrenal gland and 97 other cell types or tissues"/>
</dbReference>
<dbReference type="ExpressionAtlas" id="P49842">
    <property type="expression patterns" value="baseline and differential"/>
</dbReference>
<dbReference type="GO" id="GO:0005737">
    <property type="term" value="C:cytoplasm"/>
    <property type="evidence" value="ECO:0000314"/>
    <property type="project" value="UniProtKB"/>
</dbReference>
<dbReference type="GO" id="GO:0016607">
    <property type="term" value="C:nuclear speck"/>
    <property type="evidence" value="ECO:0000314"/>
    <property type="project" value="HPA"/>
</dbReference>
<dbReference type="GO" id="GO:0005634">
    <property type="term" value="C:nucleus"/>
    <property type="evidence" value="ECO:0000314"/>
    <property type="project" value="UniProtKB"/>
</dbReference>
<dbReference type="GO" id="GO:0005524">
    <property type="term" value="F:ATP binding"/>
    <property type="evidence" value="ECO:0007669"/>
    <property type="project" value="UniProtKB-KW"/>
</dbReference>
<dbReference type="GO" id="GO:0003690">
    <property type="term" value="F:double-stranded DNA binding"/>
    <property type="evidence" value="ECO:0000314"/>
    <property type="project" value="UniProtKB"/>
</dbReference>
<dbReference type="GO" id="GO:0003725">
    <property type="term" value="F:double-stranded RNA binding"/>
    <property type="evidence" value="ECO:0000314"/>
    <property type="project" value="UniProtKB"/>
</dbReference>
<dbReference type="GO" id="GO:0016301">
    <property type="term" value="F:kinase activity"/>
    <property type="evidence" value="ECO:0007669"/>
    <property type="project" value="UniProtKB-KW"/>
</dbReference>
<dbReference type="GO" id="GO:0042803">
    <property type="term" value="F:protein homodimerization activity"/>
    <property type="evidence" value="ECO:0000314"/>
    <property type="project" value="UniProtKB"/>
</dbReference>
<dbReference type="GO" id="GO:0046579">
    <property type="term" value="P:positive regulation of Ras protein signal transduction"/>
    <property type="evidence" value="ECO:0000314"/>
    <property type="project" value="UniProtKB"/>
</dbReference>
<dbReference type="GO" id="GO:1903518">
    <property type="term" value="P:positive regulation of single strand break repair"/>
    <property type="evidence" value="ECO:0000315"/>
    <property type="project" value="UniProtKB"/>
</dbReference>
<dbReference type="InterPro" id="IPR018865">
    <property type="entry name" value="STK19-like"/>
</dbReference>
<dbReference type="PANTHER" id="PTHR15243">
    <property type="entry name" value="SERINE/THREONINE-PROTEIN KINASE 19"/>
    <property type="match status" value="1"/>
</dbReference>
<dbReference type="PANTHER" id="PTHR15243:SF0">
    <property type="entry name" value="SERINE_THREONINE-PROTEIN KINASE 19"/>
    <property type="match status" value="1"/>
</dbReference>
<dbReference type="Pfam" id="PF10494">
    <property type="entry name" value="Stk19"/>
    <property type="match status" value="1"/>
</dbReference>
<feature type="chain" id="PRO_0000072275" description="Winged helix repair factor 1">
    <location>
        <begin position="1"/>
        <end position="254"/>
    </location>
</feature>
<feature type="region of interest" description="Winged helix domain 1" evidence="6">
    <location>
        <begin position="32"/>
        <end position="104"/>
    </location>
</feature>
<feature type="region of interest" description="Winged helix domain 2" evidence="6">
    <location>
        <begin position="120"/>
        <end position="179"/>
    </location>
</feature>
<feature type="region of interest" description="Winged helix domain 3" evidence="6">
    <location>
        <begin position="180"/>
        <end position="254"/>
    </location>
</feature>
<feature type="short sequence motif" description="Bipartite nuclear localization signal" evidence="6">
    <location>
        <begin position="4"/>
        <end position="21"/>
    </location>
</feature>
<feature type="splice variant" id="VSP_061960" description="In isoform 2 and isoform 1.">
    <original>M</original>
    <variation>MQKWFSAFDDAIIQRQWRANPSRGGGGVSFTKEVDTNVATGAPPRRQRVPGRACPWREPIRGRRGARPGGGDAGGTPGETVRHCSAPEDPIFRFSSLHSYPFPGTIKSRDM</variation>
    <location>
        <position position="1"/>
    </location>
</feature>
<feature type="splice variant" id="VSP_061961" description="In isoform 3 and isoform 1.">
    <original>V</original>
    <variation>VCDCV</variation>
    <location>
        <position position="112"/>
    </location>
</feature>
<feature type="sequence variant" id="VAR_042362" description="In dbSNP:rs616634." evidence="1 2">
    <original>S</original>
    <variation>G</variation>
    <location>
        <position position="197"/>
    </location>
</feature>
<feature type="sequence variant" id="VAR_042363" description="In dbSNP:rs7743647." evidence="2">
    <original>A</original>
    <variation>V</variation>
    <location>
        <position position="217"/>
    </location>
</feature>
<feature type="mutagenesis site" description="Partial reduction in nuclear localization." evidence="6">
    <location>
        <begin position="4"/>
        <end position="21"/>
    </location>
</feature>
<feature type="mutagenesis site" description="Reduces ubiquitination of RNAPII." evidence="9">
    <original>RT</original>
    <variation>AQ</variation>
    <location>
        <begin position="72"/>
        <end position="73"/>
    </location>
</feature>
<feature type="mutagenesis site" description="Reduces ubiquitination of RNAPII." evidence="9">
    <original>AG</original>
    <variation>QQ</variation>
    <location>
        <begin position="181"/>
        <end position="182"/>
    </location>
</feature>
<feature type="mutagenesis site" description="Abolishes DNA-binding activity. Abolishes DNA-binding activity, causes relocalization to the cytoplasm and reduces interaction with ERCC6 and RPA2; when associated with A-190 and A-201." evidence="6 7">
    <original>K</original>
    <variation>A</variation>
    <location>
        <position position="186"/>
    </location>
</feature>
<feature type="mutagenesis site" description="Weakly impairs DNA repair." evidence="11">
    <original>K</original>
    <variation>N</variation>
    <location>
        <position position="186"/>
    </location>
</feature>
<feature type="mutagenesis site" description="Abolishes DNA-binding activity, causes relocalization to the cytoplasm and reduces interaction with ERCC6 and RPA2; when associated with A-186 and A-201." evidence="6">
    <original>K</original>
    <variation>A</variation>
    <location>
        <position position="190"/>
    </location>
</feature>
<feature type="mutagenesis site" description="Reduces ubiquitination of RNAPII and interaction with DNA; when associated with D-216." evidence="9">
    <original>K</original>
    <variation>D</variation>
    <location>
        <position position="190"/>
    </location>
</feature>
<feature type="mutagenesis site" description="Abolishes DNA-binding activity." evidence="7">
    <original>RKAK</original>
    <variation>EEAE</variation>
    <location>
        <begin position="200"/>
        <end position="203"/>
    </location>
</feature>
<feature type="mutagenesis site" description="Severely impairs DNA repair." evidence="11">
    <original>RK</original>
    <variation>AA</variation>
    <variation>EE</variation>
    <location>
        <begin position="200"/>
        <end position="201"/>
    </location>
</feature>
<feature type="mutagenesis site" description="Does not affect DNA repair." evidence="11">
    <original>R</original>
    <variation>W</variation>
    <location>
        <position position="200"/>
    </location>
</feature>
<feature type="mutagenesis site" description="Dramatically reduces DNA-binding activity. Abolishes DNA-binding activity, causes relocalization to the cytoplasm and reduces interaction with ERCC6 and RPA2; when associated with A-186 and A-190." evidence="6">
    <original>K</original>
    <variation>A</variation>
    <location>
        <position position="201"/>
    </location>
</feature>
<feature type="mutagenesis site" description="Reduces ubiquitination of RNAPII. Reduces interaction with UVSSA." evidence="9">
    <original>KY</original>
    <variation>EA</variation>
    <location>
        <begin position="203"/>
        <end position="204"/>
    </location>
</feature>
<feature type="mutagenesis site" description="Reduces self-association and DNA-binding activity. Increases cytoplasmic localization." evidence="6">
    <original>Y</original>
    <variation>E</variation>
    <location>
        <position position="204"/>
    </location>
</feature>
<feature type="mutagenesis site" description="Increases cytoplasmic localization." evidence="6">
    <original>E</original>
    <variation>K</variation>
    <location>
        <position position="206"/>
    </location>
</feature>
<feature type="mutagenesis site" description="Abolishes DNA-binding activity." evidence="7">
    <original>RR</original>
    <variation>EE</variation>
    <location>
        <begin position="215"/>
        <end position="216"/>
    </location>
</feature>
<feature type="mutagenesis site" description="Reduces ubiquitination of RNAPII and interaction with DNA; when associated with D-190." evidence="9">
    <original>R</original>
    <variation>D</variation>
    <location>
        <position position="216"/>
    </location>
</feature>
<feature type="mutagenesis site" description="Increases cytoplasmic localization." evidence="6">
    <original>L</original>
    <variation>A</variation>
    <location>
        <position position="248"/>
    </location>
</feature>
<feature type="mutagenesis site" description="Increases cytoplasmic localization." evidence="6">
    <original>R</original>
    <variation>A</variation>
    <location>
        <position position="250"/>
    </location>
</feature>
<feature type="helix" evidence="26">
    <location>
        <begin position="9"/>
        <end position="11"/>
    </location>
</feature>
<feature type="helix" evidence="25">
    <location>
        <begin position="35"/>
        <end position="46"/>
    </location>
</feature>
<feature type="helix" evidence="25">
    <location>
        <begin position="49"/>
        <end position="52"/>
    </location>
</feature>
<feature type="turn" evidence="27">
    <location>
        <begin position="53"/>
        <end position="55"/>
    </location>
</feature>
<feature type="strand" evidence="27">
    <location>
        <begin position="59"/>
        <end position="61"/>
    </location>
</feature>
<feature type="helix" evidence="25">
    <location>
        <begin position="62"/>
        <end position="68"/>
    </location>
</feature>
<feature type="helix" evidence="25">
    <location>
        <begin position="72"/>
        <end position="84"/>
    </location>
</feature>
<feature type="strand" evidence="25">
    <location>
        <begin position="87"/>
        <end position="95"/>
    </location>
</feature>
<feature type="strand" evidence="25">
    <location>
        <begin position="98"/>
        <end position="104"/>
    </location>
</feature>
<feature type="helix" evidence="25">
    <location>
        <begin position="105"/>
        <end position="115"/>
    </location>
</feature>
<feature type="turn" evidence="25">
    <location>
        <begin position="116"/>
        <end position="118"/>
    </location>
</feature>
<feature type="helix" evidence="25">
    <location>
        <begin position="122"/>
        <end position="131"/>
    </location>
</feature>
<feature type="helix" evidence="25">
    <location>
        <begin position="133"/>
        <end position="135"/>
    </location>
</feature>
<feature type="strand" evidence="25">
    <location>
        <begin position="139"/>
        <end position="142"/>
    </location>
</feature>
<feature type="helix" evidence="25">
    <location>
        <begin position="143"/>
        <end position="148"/>
    </location>
</feature>
<feature type="helix" evidence="25">
    <location>
        <begin position="154"/>
        <end position="162"/>
    </location>
</feature>
<feature type="strand" evidence="25">
    <location>
        <begin position="165"/>
        <end position="170"/>
    </location>
</feature>
<feature type="strand" evidence="25">
    <location>
        <begin position="173"/>
        <end position="176"/>
    </location>
</feature>
<feature type="helix" evidence="25">
    <location>
        <begin position="181"/>
        <end position="201"/>
    </location>
</feature>
<feature type="helix" evidence="25">
    <location>
        <begin position="203"/>
        <end position="205"/>
    </location>
</feature>
<feature type="strand" evidence="25">
    <location>
        <begin position="206"/>
        <end position="208"/>
    </location>
</feature>
<feature type="helix" evidence="25">
    <location>
        <begin position="209"/>
        <end position="213"/>
    </location>
</feature>
<feature type="helix" evidence="25">
    <location>
        <begin position="225"/>
        <end position="234"/>
    </location>
</feature>
<feature type="strand" evidence="25">
    <location>
        <begin position="237"/>
        <end position="243"/>
    </location>
</feature>
<feature type="strand" evidence="25">
    <location>
        <begin position="246"/>
        <end position="250"/>
    </location>
</feature>
<feature type="sequence variant" id="VAR_051387" description="In dbSNP:rs34843142.">
    <original>A</original>
    <variation>D</variation>
    <location sequence="P49842-1">
        <position position="39"/>
    </location>
</feature>
<feature type="sequence variant" id="VAR_042361" description="Recurrent gain-of-function variant found in metastatic melanoma; somatic mutation; dbSNP:rs267600971." evidence="2">
    <original>D</original>
    <variation>N</variation>
    <location sequence="P49842-1">
        <position position="89"/>
    </location>
</feature>
<sequence>MSWKRHHLIPETFGVKRRRKRGPVESDPLRGEPGSARAAVSELMQLFPRGLFEDALPPIVLRSQVYSLVPDRTVADRQLKELQEQGEIRIVQLGFDLDAHGIIFTEDYRTRVLKACDGRPYAGAVQKFLASVLPACGDLSFQQDQMTQTFGFRDSEITHLVNAGVLTVRDAGSWWLAVPGAGRFIKYFVKGRQAVLSMVRKAKYRELLLSELLGRRAPVVVRLGLTYHVHDLIGAQLVDCISTTSGTLLRLPET</sequence>
<protein>
    <recommendedName>
        <fullName evidence="19">Winged helix repair factor 1</fullName>
    </recommendedName>
    <alternativeName>
        <fullName evidence="18">Inactive serine/threonine-protein kinase 19</fullName>
    </alternativeName>
    <alternativeName>
        <fullName evidence="16">Protein G11</fullName>
    </alternativeName>
    <alternativeName>
        <fullName evidence="17">Protein RP1</fullName>
    </alternativeName>
    <alternativeName>
        <fullName evidence="15">Tandem winged helix protein formerly known as STK19</fullName>
    </alternativeName>
</protein>